<feature type="chain" id="PRO_0000117495" description="NADH-ubiquinone oxidoreductase chain 1">
    <location>
        <begin position="1"/>
        <end position="319"/>
    </location>
</feature>
<feature type="transmembrane region" description="Helical" evidence="2">
    <location>
        <begin position="5"/>
        <end position="25"/>
    </location>
</feature>
<feature type="transmembrane region" description="Helical" evidence="2">
    <location>
        <begin position="72"/>
        <end position="92"/>
    </location>
</feature>
<feature type="transmembrane region" description="Helical" evidence="2">
    <location>
        <begin position="102"/>
        <end position="122"/>
    </location>
</feature>
<feature type="transmembrane region" description="Helical" evidence="2">
    <location>
        <begin position="146"/>
        <end position="166"/>
    </location>
</feature>
<feature type="transmembrane region" description="Helical" evidence="2">
    <location>
        <begin position="173"/>
        <end position="193"/>
    </location>
</feature>
<feature type="transmembrane region" description="Helical" evidence="2">
    <location>
        <begin position="225"/>
        <end position="245"/>
    </location>
</feature>
<feature type="transmembrane region" description="Helical" evidence="2">
    <location>
        <begin position="254"/>
        <end position="274"/>
    </location>
</feature>
<feature type="transmembrane region" description="Helical" evidence="2">
    <location>
        <begin position="295"/>
        <end position="315"/>
    </location>
</feature>
<proteinExistence type="inferred from homology"/>
<reference key="1">
    <citation type="journal article" date="2001" name="Cladistics">
        <title>Mitochondrial DNA evidence and evolution in Varanoidea (Squamata).</title>
        <authorList>
            <person name="Ast J.C."/>
        </authorList>
    </citation>
    <scope>NUCLEOTIDE SEQUENCE [GENOMIC DNA]</scope>
    <source>
        <strain>Isolate UF 67500</strain>
    </source>
</reference>
<dbReference type="EC" id="7.1.1.2"/>
<dbReference type="EMBL" id="AF407497">
    <property type="protein sequence ID" value="AAL10044.1"/>
    <property type="molecule type" value="Genomic_DNA"/>
</dbReference>
<dbReference type="SMR" id="Q94VI4"/>
<dbReference type="GO" id="GO:0005743">
    <property type="term" value="C:mitochondrial inner membrane"/>
    <property type="evidence" value="ECO:0007669"/>
    <property type="project" value="UniProtKB-SubCell"/>
</dbReference>
<dbReference type="GO" id="GO:0008137">
    <property type="term" value="F:NADH dehydrogenase (ubiquinone) activity"/>
    <property type="evidence" value="ECO:0007669"/>
    <property type="project" value="UniProtKB-EC"/>
</dbReference>
<dbReference type="GO" id="GO:0009060">
    <property type="term" value="P:aerobic respiration"/>
    <property type="evidence" value="ECO:0007669"/>
    <property type="project" value="TreeGrafter"/>
</dbReference>
<dbReference type="HAMAP" id="MF_01350">
    <property type="entry name" value="NDH1_NuoH"/>
    <property type="match status" value="1"/>
</dbReference>
<dbReference type="InterPro" id="IPR001694">
    <property type="entry name" value="NADH_UbQ_OxRdtase_su1/FPO"/>
</dbReference>
<dbReference type="InterPro" id="IPR018086">
    <property type="entry name" value="NADH_UbQ_OxRdtase_su1_CS"/>
</dbReference>
<dbReference type="PANTHER" id="PTHR11432">
    <property type="entry name" value="NADH DEHYDROGENASE SUBUNIT 1"/>
    <property type="match status" value="1"/>
</dbReference>
<dbReference type="PANTHER" id="PTHR11432:SF3">
    <property type="entry name" value="NADH-UBIQUINONE OXIDOREDUCTASE CHAIN 1"/>
    <property type="match status" value="1"/>
</dbReference>
<dbReference type="Pfam" id="PF00146">
    <property type="entry name" value="NADHdh"/>
    <property type="match status" value="1"/>
</dbReference>
<dbReference type="PROSITE" id="PS00667">
    <property type="entry name" value="COMPLEX1_ND1_1"/>
    <property type="match status" value="1"/>
</dbReference>
<dbReference type="PROSITE" id="PS00668">
    <property type="entry name" value="COMPLEX1_ND1_2"/>
    <property type="match status" value="1"/>
</dbReference>
<sequence length="319" mass="35418">MLPTTINSLMYIIPILIAVAFLTLMERKMLGYMQLRKGPNITGPYGLLQPIADGLKLFTKEPIRPLHTSPTLLISSPILALTTAMLIWTPIPMPYALTNLNLGLLSILAISSMAVNSILWAGWASNSKYAIIGSLRAVAQTISYEVTLGIILLSILILTGGFTMQLLTTTQEFTWLLTTSWPLAMMWFISTLAETNRAPFDLTEGESELVSGFNVEYAGGPFALFFLTEYANIIVMNLLTCILFISPGPPQHPELFLINLITKTMILSLSFLWIRASYPSFRYDQLMHLLWKQFLPLTMSLCLLHTSLPISTSGIPPLS</sequence>
<organism>
    <name type="scientific">Varanus flavescens</name>
    <name type="common">Yellow monitor</name>
    <name type="synonym">Monitor flavescens</name>
    <dbReference type="NCBI Taxonomy" id="169839"/>
    <lineage>
        <taxon>Eukaryota</taxon>
        <taxon>Metazoa</taxon>
        <taxon>Chordata</taxon>
        <taxon>Craniata</taxon>
        <taxon>Vertebrata</taxon>
        <taxon>Euteleostomi</taxon>
        <taxon>Lepidosauria</taxon>
        <taxon>Squamata</taxon>
        <taxon>Bifurcata</taxon>
        <taxon>Unidentata</taxon>
        <taxon>Episquamata</taxon>
        <taxon>Toxicofera</taxon>
        <taxon>Anguimorpha</taxon>
        <taxon>Paleoanguimorpha</taxon>
        <taxon>Varanoidea</taxon>
        <taxon>Varanidae</taxon>
        <taxon>Varanus</taxon>
    </lineage>
</organism>
<name>NU1M_VARFL</name>
<keyword id="KW-0249">Electron transport</keyword>
<keyword id="KW-0472">Membrane</keyword>
<keyword id="KW-0496">Mitochondrion</keyword>
<keyword id="KW-0999">Mitochondrion inner membrane</keyword>
<keyword id="KW-0520">NAD</keyword>
<keyword id="KW-0679">Respiratory chain</keyword>
<keyword id="KW-1278">Translocase</keyword>
<keyword id="KW-0812">Transmembrane</keyword>
<keyword id="KW-1133">Transmembrane helix</keyword>
<keyword id="KW-0813">Transport</keyword>
<keyword id="KW-0830">Ubiquinone</keyword>
<geneLocation type="mitochondrion"/>
<comment type="function">
    <text evidence="1">Core subunit of the mitochondrial membrane respiratory chain NADH dehydrogenase (Complex I) that is believed to belong to the minimal assembly required for catalysis. Complex I functions in the transfer of electrons from NADH to the respiratory chain. The immediate electron acceptor for the enzyme is believed to be ubiquinone (By similarity).</text>
</comment>
<comment type="catalytic activity">
    <reaction>
        <text>a ubiquinone + NADH + 5 H(+)(in) = a ubiquinol + NAD(+) + 4 H(+)(out)</text>
        <dbReference type="Rhea" id="RHEA:29091"/>
        <dbReference type="Rhea" id="RHEA-COMP:9565"/>
        <dbReference type="Rhea" id="RHEA-COMP:9566"/>
        <dbReference type="ChEBI" id="CHEBI:15378"/>
        <dbReference type="ChEBI" id="CHEBI:16389"/>
        <dbReference type="ChEBI" id="CHEBI:17976"/>
        <dbReference type="ChEBI" id="CHEBI:57540"/>
        <dbReference type="ChEBI" id="CHEBI:57945"/>
        <dbReference type="EC" id="7.1.1.2"/>
    </reaction>
</comment>
<comment type="subcellular location">
    <subcellularLocation>
        <location evidence="1">Mitochondrion inner membrane</location>
        <topology evidence="1">Multi-pass membrane protein</topology>
    </subcellularLocation>
</comment>
<comment type="similarity">
    <text evidence="3">Belongs to the complex I subunit 1 family.</text>
</comment>
<gene>
    <name type="primary">MT-ND1</name>
    <name type="synonym">MTND1</name>
    <name type="synonym">NADH1</name>
    <name type="synonym">ND1</name>
</gene>
<evidence type="ECO:0000250" key="1"/>
<evidence type="ECO:0000255" key="2"/>
<evidence type="ECO:0000305" key="3"/>
<accession>Q94VI4</accession>
<protein>
    <recommendedName>
        <fullName>NADH-ubiquinone oxidoreductase chain 1</fullName>
        <ecNumber>7.1.1.2</ecNumber>
    </recommendedName>
    <alternativeName>
        <fullName>NADH dehydrogenase subunit 1</fullName>
    </alternativeName>
</protein>